<comment type="function">
    <text evidence="1">Involved in the catabolism of L-rhamnose (6-deoxy-L-mannose). Catalyzes the transfer of the gamma-phosphate group from ATP to the 1-hydroxyl group of L-rhamnulose to yield L-rhamnulose 1-phosphate.</text>
</comment>
<comment type="catalytic activity">
    <reaction evidence="1">
        <text>L-rhamnulose + ATP = L-rhamnulose 1-phosphate + ADP + H(+)</text>
        <dbReference type="Rhea" id="RHEA:20117"/>
        <dbReference type="ChEBI" id="CHEBI:15378"/>
        <dbReference type="ChEBI" id="CHEBI:17897"/>
        <dbReference type="ChEBI" id="CHEBI:30616"/>
        <dbReference type="ChEBI" id="CHEBI:58313"/>
        <dbReference type="ChEBI" id="CHEBI:456216"/>
        <dbReference type="EC" id="2.7.1.5"/>
    </reaction>
</comment>
<comment type="cofactor">
    <cofactor evidence="1">
        <name>Mg(2+)</name>
        <dbReference type="ChEBI" id="CHEBI:18420"/>
    </cofactor>
</comment>
<comment type="pathway">
    <text evidence="1">Carbohydrate degradation; L-rhamnose degradation; glycerone phosphate from L-rhamnose: step 2/3.</text>
</comment>
<comment type="similarity">
    <text evidence="1">Belongs to the rhamnulokinase family.</text>
</comment>
<keyword id="KW-0067">ATP-binding</keyword>
<keyword id="KW-1015">Disulfide bond</keyword>
<keyword id="KW-0418">Kinase</keyword>
<keyword id="KW-0460">Magnesium</keyword>
<keyword id="KW-0547">Nucleotide-binding</keyword>
<keyword id="KW-0684">Rhamnose metabolism</keyword>
<keyword id="KW-0808">Transferase</keyword>
<reference key="1">
    <citation type="journal article" date="2010" name="PLoS Genet.">
        <title>Genome sequence of the plant growth promoting endophytic bacterium Enterobacter sp. 638.</title>
        <authorList>
            <person name="Taghavi S."/>
            <person name="van der Lelie D."/>
            <person name="Hoffman A."/>
            <person name="Zhang Y.B."/>
            <person name="Walla M.D."/>
            <person name="Vangronsveld J."/>
            <person name="Newman L."/>
            <person name="Monchy S."/>
        </authorList>
    </citation>
    <scope>NUCLEOTIDE SEQUENCE [LARGE SCALE GENOMIC DNA]</scope>
    <source>
        <strain>638</strain>
    </source>
</reference>
<organism>
    <name type="scientific">Enterobacter sp. (strain 638)</name>
    <dbReference type="NCBI Taxonomy" id="399742"/>
    <lineage>
        <taxon>Bacteria</taxon>
        <taxon>Pseudomonadati</taxon>
        <taxon>Pseudomonadota</taxon>
        <taxon>Gammaproteobacteria</taxon>
        <taxon>Enterobacterales</taxon>
        <taxon>Enterobacteriaceae</taxon>
        <taxon>Enterobacter</taxon>
    </lineage>
</organism>
<proteinExistence type="inferred from homology"/>
<feature type="chain" id="PRO_1000068717" description="Rhamnulokinase">
    <location>
        <begin position="1"/>
        <end position="489"/>
    </location>
</feature>
<feature type="active site" description="Proton acceptor" evidence="1">
    <location>
        <position position="237"/>
    </location>
</feature>
<feature type="binding site" evidence="1">
    <location>
        <begin position="13"/>
        <end position="17"/>
    </location>
    <ligand>
        <name>ATP</name>
        <dbReference type="ChEBI" id="CHEBI:30616"/>
    </ligand>
</feature>
<feature type="binding site" evidence="1">
    <location>
        <position position="83"/>
    </location>
    <ligand>
        <name>substrate</name>
    </ligand>
</feature>
<feature type="binding site" evidence="1">
    <location>
        <begin position="236"/>
        <end position="238"/>
    </location>
    <ligand>
        <name>substrate</name>
    </ligand>
</feature>
<feature type="binding site" evidence="1">
    <location>
        <position position="259"/>
    </location>
    <ligand>
        <name>ATP</name>
        <dbReference type="ChEBI" id="CHEBI:30616"/>
    </ligand>
</feature>
<feature type="binding site" evidence="1">
    <location>
        <position position="296"/>
    </location>
    <ligand>
        <name>substrate</name>
    </ligand>
</feature>
<feature type="binding site" evidence="1">
    <location>
        <position position="304"/>
    </location>
    <ligand>
        <name>ATP</name>
        <dbReference type="ChEBI" id="CHEBI:30616"/>
    </ligand>
</feature>
<feature type="binding site" evidence="1">
    <location>
        <position position="402"/>
    </location>
    <ligand>
        <name>ATP</name>
        <dbReference type="ChEBI" id="CHEBI:30616"/>
    </ligand>
</feature>
<feature type="disulfide bond" evidence="1">
    <location>
        <begin position="68"/>
        <end position="222"/>
    </location>
</feature>
<feature type="disulfide bond" evidence="1">
    <location>
        <begin position="353"/>
        <end position="370"/>
    </location>
</feature>
<feature type="disulfide bond" evidence="1">
    <location>
        <begin position="413"/>
        <end position="417"/>
    </location>
</feature>
<accession>A4WG92</accession>
<name>RHAB_ENT38</name>
<evidence type="ECO:0000255" key="1">
    <source>
        <dbReference type="HAMAP-Rule" id="MF_01535"/>
    </source>
</evidence>
<dbReference type="EC" id="2.7.1.5" evidence="1"/>
<dbReference type="EMBL" id="CP000653">
    <property type="protein sequence ID" value="ABP62722.1"/>
    <property type="molecule type" value="Genomic_DNA"/>
</dbReference>
<dbReference type="RefSeq" id="WP_015961026.1">
    <property type="nucleotide sequence ID" value="NC_009436.1"/>
</dbReference>
<dbReference type="SMR" id="A4WG92"/>
<dbReference type="STRING" id="399742.Ent638_4067"/>
<dbReference type="KEGG" id="ent:Ent638_4067"/>
<dbReference type="eggNOG" id="COG1070">
    <property type="taxonomic scope" value="Bacteria"/>
</dbReference>
<dbReference type="HOGENOM" id="CLU_039395_0_0_6"/>
<dbReference type="OrthoDB" id="9761504at2"/>
<dbReference type="UniPathway" id="UPA00541">
    <property type="reaction ID" value="UER00602"/>
</dbReference>
<dbReference type="Proteomes" id="UP000000230">
    <property type="component" value="Chromosome"/>
</dbReference>
<dbReference type="GO" id="GO:0005829">
    <property type="term" value="C:cytosol"/>
    <property type="evidence" value="ECO:0007669"/>
    <property type="project" value="TreeGrafter"/>
</dbReference>
<dbReference type="GO" id="GO:0005524">
    <property type="term" value="F:ATP binding"/>
    <property type="evidence" value="ECO:0007669"/>
    <property type="project" value="UniProtKB-KW"/>
</dbReference>
<dbReference type="GO" id="GO:0004370">
    <property type="term" value="F:glycerol kinase activity"/>
    <property type="evidence" value="ECO:0007669"/>
    <property type="project" value="TreeGrafter"/>
</dbReference>
<dbReference type="GO" id="GO:0008993">
    <property type="term" value="F:rhamnulokinase activity"/>
    <property type="evidence" value="ECO:0007669"/>
    <property type="project" value="UniProtKB-UniRule"/>
</dbReference>
<dbReference type="GO" id="GO:0006071">
    <property type="term" value="P:glycerol metabolic process"/>
    <property type="evidence" value="ECO:0007669"/>
    <property type="project" value="TreeGrafter"/>
</dbReference>
<dbReference type="GO" id="GO:0019301">
    <property type="term" value="P:rhamnose catabolic process"/>
    <property type="evidence" value="ECO:0007669"/>
    <property type="project" value="UniProtKB-UniRule"/>
</dbReference>
<dbReference type="CDD" id="cd07771">
    <property type="entry name" value="ASKHA_NBD_FGGY_RhaB-like"/>
    <property type="match status" value="1"/>
</dbReference>
<dbReference type="FunFam" id="3.30.420.40:FF:000064">
    <property type="entry name" value="Rhamnulokinase"/>
    <property type="match status" value="1"/>
</dbReference>
<dbReference type="FunFam" id="3.30.420.40:FF:000073">
    <property type="entry name" value="Rhamnulokinase"/>
    <property type="match status" value="1"/>
</dbReference>
<dbReference type="Gene3D" id="3.30.420.40">
    <property type="match status" value="2"/>
</dbReference>
<dbReference type="HAMAP" id="MF_01535">
    <property type="entry name" value="Rhamnulokinase"/>
    <property type="match status" value="1"/>
</dbReference>
<dbReference type="InterPro" id="IPR043129">
    <property type="entry name" value="ATPase_NBD"/>
</dbReference>
<dbReference type="InterPro" id="IPR018485">
    <property type="entry name" value="FGGY_C"/>
</dbReference>
<dbReference type="InterPro" id="IPR018484">
    <property type="entry name" value="FGGY_N"/>
</dbReference>
<dbReference type="InterPro" id="IPR013449">
    <property type="entry name" value="Rhamnulokinase"/>
</dbReference>
<dbReference type="NCBIfam" id="NF007925">
    <property type="entry name" value="PRK10640.1"/>
    <property type="match status" value="1"/>
</dbReference>
<dbReference type="NCBIfam" id="TIGR02627">
    <property type="entry name" value="rhamnulo_kin"/>
    <property type="match status" value="1"/>
</dbReference>
<dbReference type="PANTHER" id="PTHR10196:SF93">
    <property type="entry name" value="L-RHAMNULOKINASE"/>
    <property type="match status" value="1"/>
</dbReference>
<dbReference type="PANTHER" id="PTHR10196">
    <property type="entry name" value="SUGAR KINASE"/>
    <property type="match status" value="1"/>
</dbReference>
<dbReference type="Pfam" id="PF02782">
    <property type="entry name" value="FGGY_C"/>
    <property type="match status" value="1"/>
</dbReference>
<dbReference type="Pfam" id="PF00370">
    <property type="entry name" value="FGGY_N"/>
    <property type="match status" value="1"/>
</dbReference>
<dbReference type="SUPFAM" id="SSF53067">
    <property type="entry name" value="Actin-like ATPase domain"/>
    <property type="match status" value="2"/>
</dbReference>
<protein>
    <recommendedName>
        <fullName evidence="1">Rhamnulokinase</fullName>
        <shortName evidence="1">RhaB</shortName>
        <ecNumber evidence="1">2.7.1.5</ecNumber>
    </recommendedName>
    <alternativeName>
        <fullName evidence="1">ATP:L-rhamnulose phosphotransferase</fullName>
    </alternativeName>
    <alternativeName>
        <fullName evidence="1">L-rhamnulose 1-kinase</fullName>
    </alternativeName>
    <alternativeName>
        <fullName evidence="1">Rhamnulose kinase</fullName>
    </alternativeName>
</protein>
<gene>
    <name evidence="1" type="primary">rhaB</name>
    <name type="ordered locus">Ent638_4067</name>
</gene>
<sequence>MTLRHCVAVDLGASSGRVMLACYAPEQRTLTLREIHRFVNCLQKQGGVDTWDIDSLEAEIRTGLNKVCEEGILIDSIGIDTWGVDYVLLDRNGARIGLPVSYRDSRTDGVMARAIEQLGKADIYGRSGIQFLPFNTLYQLRALAEQQPELIKNVAHALLIPDYFSYRLTGNMNWEYTNATTTQLVNINSDNWDENLLNWTGVSAAWFGTPTHPGNVIGHWICPLGNQIPVVAVASHDTASAVIASPLASQDAAYLSSGTWSLMGFESKTPYTSDAALAANITNEGGAEGRYRVLKNIMGLWLLQRVLKEQNVSDLSALIADTETLAACRFVINPNDDRFINPANMSTEIQAACRETNQPVPNTPAELARCIFDSLALLYADVLQELATLRGKPFSQLHIVGGGCQNRLLNQLCADACGITVVAGPVEASTLGNIGIQLMTLDELTNVDDFRTVVTGNYALTTFTPHSCHEIARYRAQFQQKRLTKELCA</sequence>